<comment type="function">
    <text evidence="2">Catalyzes the hydrolysis of linear beta-1,2-glucan and beta-1,2-glucooligosaccharides with degrees of polymerization (DPs) greater than or equal to 4, to produce sophorose. The best substrates are tetra- and pentasaccharides. Acts as an exo-type enzyme that releases sophorose from the non-reducing end of the substrate. It cannot hydrolyze cyclic beta-1,2-glucans.</text>
</comment>
<comment type="catalytic activity">
    <reaction evidence="2">
        <text>[(1-&gt;2)-beta-D-glucosyl](n) + H2O = [(1-&gt;2)-beta-D-glucosyl](n-2) + sophorose</text>
        <dbReference type="Rhea" id="RHEA:62388"/>
        <dbReference type="Rhea" id="RHEA-COMP:11881"/>
        <dbReference type="Rhea" id="RHEA-COMP:16082"/>
        <dbReference type="ChEBI" id="CHEBI:1230"/>
        <dbReference type="ChEBI" id="CHEBI:15377"/>
        <dbReference type="ChEBI" id="CHEBI:27517"/>
        <dbReference type="EC" id="3.2.1.214"/>
    </reaction>
</comment>
<comment type="biophysicochemical properties">
    <kinetics>
        <KM evidence="2">1.8 mM for beta-1,2-glucotetrasaccharide</KM>
        <KM evidence="2">1.6 mM for beta-1,2-glucopentasaccharide</KM>
        <KM evidence="2">1 mM for beta-1,2-glucan (with an average DP of 77)</KM>
        <text evidence="2">kcat is 54 sec(-1) with beta-1,2-glucotetrasaccharide as substrate. kcat is 29 sec(-1) with beta-1,2-glucopentasaccharide as substrate. kcat is 0.48 sec(-1) with beta-1,2-glucan (with an average DP of 77) as substrate.</text>
    </kinetics>
    <phDependence>
        <text evidence="2">Optimum pH is 6.0.</text>
    </phDependence>
    <temperatureDependence>
        <text evidence="2">Optimum temperature is 40 degrees Celsius.</text>
    </temperatureDependence>
</comment>
<comment type="subunit">
    <text evidence="2">Monomer.</text>
</comment>
<comment type="subcellular location">
    <subcellularLocation>
        <location evidence="5">Periplasm</location>
    </subcellularLocation>
</comment>
<proteinExistence type="evidence at protein level"/>
<keyword id="KW-0002">3D-structure</keyword>
<keyword id="KW-0326">Glycosidase</keyword>
<keyword id="KW-0378">Hydrolase</keyword>
<keyword id="KW-0574">Periplasm</keyword>
<keyword id="KW-1185">Reference proteome</keyword>
<keyword id="KW-0732">Signal</keyword>
<gene>
    <name evidence="6" type="ordered locus">BDI_3064</name>
</gene>
<evidence type="ECO:0000255" key="1"/>
<evidence type="ECO:0000269" key="2">
    <source>
    </source>
</evidence>
<evidence type="ECO:0000303" key="3">
    <source>
    </source>
</evidence>
<evidence type="ECO:0000305" key="4"/>
<evidence type="ECO:0000305" key="5">
    <source>
    </source>
</evidence>
<evidence type="ECO:0000312" key="6">
    <source>
        <dbReference type="EMBL" id="ABR44770.1"/>
    </source>
</evidence>
<evidence type="ECO:0007744" key="7">
    <source>
        <dbReference type="PDB" id="5Z06"/>
    </source>
</evidence>
<evidence type="ECO:0007829" key="8">
    <source>
        <dbReference type="PDB" id="5Z06"/>
    </source>
</evidence>
<feature type="signal peptide" evidence="1">
    <location>
        <begin position="1"/>
        <end position="18"/>
    </location>
</feature>
<feature type="chain" id="PRO_5002699300" description="Exo beta-1,2-glucooligosaccharide sophorohydrolase (non-reducing end)">
    <location>
        <begin position="19"/>
        <end position="721"/>
    </location>
</feature>
<feature type="domain" description="Glycoamylase-like" evidence="1">
    <location>
        <begin position="474"/>
        <end position="708"/>
    </location>
</feature>
<feature type="strand" evidence="8">
    <location>
        <begin position="26"/>
        <end position="29"/>
    </location>
</feature>
<feature type="strand" evidence="8">
    <location>
        <begin position="32"/>
        <end position="36"/>
    </location>
</feature>
<feature type="strand" evidence="8">
    <location>
        <begin position="40"/>
        <end position="45"/>
    </location>
</feature>
<feature type="strand" evidence="8">
    <location>
        <begin position="48"/>
        <end position="50"/>
    </location>
</feature>
<feature type="strand" evidence="8">
    <location>
        <begin position="58"/>
        <end position="62"/>
    </location>
</feature>
<feature type="strand" evidence="8">
    <location>
        <begin position="65"/>
        <end position="68"/>
    </location>
</feature>
<feature type="strand" evidence="8">
    <location>
        <begin position="70"/>
        <end position="76"/>
    </location>
</feature>
<feature type="strand" evidence="8">
    <location>
        <begin position="82"/>
        <end position="88"/>
    </location>
</feature>
<feature type="strand" evidence="8">
    <location>
        <begin position="103"/>
        <end position="112"/>
    </location>
</feature>
<feature type="helix" evidence="8">
    <location>
        <begin position="116"/>
        <end position="118"/>
    </location>
</feature>
<feature type="strand" evidence="8">
    <location>
        <begin position="121"/>
        <end position="126"/>
    </location>
</feature>
<feature type="helix" evidence="8">
    <location>
        <begin position="137"/>
        <end position="140"/>
    </location>
</feature>
<feature type="strand" evidence="8">
    <location>
        <begin position="146"/>
        <end position="155"/>
    </location>
</feature>
<feature type="helix" evidence="8">
    <location>
        <begin position="156"/>
        <end position="159"/>
    </location>
</feature>
<feature type="turn" evidence="8">
    <location>
        <begin position="166"/>
        <end position="168"/>
    </location>
</feature>
<feature type="helix" evidence="8">
    <location>
        <begin position="169"/>
        <end position="171"/>
    </location>
</feature>
<feature type="strand" evidence="8">
    <location>
        <begin position="172"/>
        <end position="178"/>
    </location>
</feature>
<feature type="strand" evidence="8">
    <location>
        <begin position="186"/>
        <end position="197"/>
    </location>
</feature>
<feature type="strand" evidence="8">
    <location>
        <begin position="211"/>
        <end position="217"/>
    </location>
</feature>
<feature type="strand" evidence="8">
    <location>
        <begin position="219"/>
        <end position="227"/>
    </location>
</feature>
<feature type="strand" evidence="8">
    <location>
        <begin position="235"/>
        <end position="246"/>
    </location>
</feature>
<feature type="strand" evidence="8">
    <location>
        <begin position="249"/>
        <end position="254"/>
    </location>
</feature>
<feature type="strand" evidence="8">
    <location>
        <begin position="260"/>
        <end position="264"/>
    </location>
</feature>
<feature type="strand" evidence="8">
    <location>
        <begin position="271"/>
        <end position="279"/>
    </location>
</feature>
<feature type="strand" evidence="8">
    <location>
        <begin position="292"/>
        <end position="295"/>
    </location>
</feature>
<feature type="helix" evidence="8">
    <location>
        <begin position="301"/>
        <end position="314"/>
    </location>
</feature>
<feature type="turn" evidence="8">
    <location>
        <begin position="315"/>
        <end position="319"/>
    </location>
</feature>
<feature type="turn" evidence="8">
    <location>
        <begin position="322"/>
        <end position="324"/>
    </location>
</feature>
<feature type="strand" evidence="8">
    <location>
        <begin position="328"/>
        <end position="333"/>
    </location>
</feature>
<feature type="strand" evidence="8">
    <location>
        <begin position="335"/>
        <end position="339"/>
    </location>
</feature>
<feature type="helix" evidence="8">
    <location>
        <begin position="340"/>
        <end position="355"/>
    </location>
</feature>
<feature type="helix" evidence="8">
    <location>
        <begin position="361"/>
        <end position="377"/>
    </location>
</feature>
<feature type="strand" evidence="8">
    <location>
        <begin position="387"/>
        <end position="390"/>
    </location>
</feature>
<feature type="turn" evidence="8">
    <location>
        <begin position="391"/>
        <end position="393"/>
    </location>
</feature>
<feature type="strand" evidence="8">
    <location>
        <begin position="406"/>
        <end position="408"/>
    </location>
</feature>
<feature type="helix" evidence="8">
    <location>
        <begin position="409"/>
        <end position="425"/>
    </location>
</feature>
<feature type="helix" evidence="8">
    <location>
        <begin position="431"/>
        <end position="445"/>
    </location>
</feature>
<feature type="helix" evidence="8">
    <location>
        <begin position="449"/>
        <end position="453"/>
    </location>
</feature>
<feature type="strand" evidence="8">
    <location>
        <begin position="462"/>
        <end position="466"/>
    </location>
</feature>
<feature type="turn" evidence="8">
    <location>
        <begin position="467"/>
        <end position="469"/>
    </location>
</feature>
<feature type="strand" evidence="8">
    <location>
        <begin position="479"/>
        <end position="481"/>
    </location>
</feature>
<feature type="helix" evidence="8">
    <location>
        <begin position="484"/>
        <end position="492"/>
    </location>
</feature>
<feature type="turn" evidence="8">
    <location>
        <begin position="494"/>
        <end position="496"/>
    </location>
</feature>
<feature type="helix" evidence="8">
    <location>
        <begin position="502"/>
        <end position="505"/>
    </location>
</feature>
<feature type="turn" evidence="8">
    <location>
        <begin position="506"/>
        <end position="508"/>
    </location>
</feature>
<feature type="helix" evidence="8">
    <location>
        <begin position="512"/>
        <end position="522"/>
    </location>
</feature>
<feature type="strand" evidence="8">
    <location>
        <begin position="523"/>
        <end position="525"/>
    </location>
</feature>
<feature type="turn" evidence="8">
    <location>
        <begin position="526"/>
        <end position="529"/>
    </location>
</feature>
<feature type="helix" evidence="8">
    <location>
        <begin position="551"/>
        <end position="554"/>
    </location>
</feature>
<feature type="helix" evidence="8">
    <location>
        <begin position="556"/>
        <end position="558"/>
    </location>
</feature>
<feature type="strand" evidence="8">
    <location>
        <begin position="559"/>
        <end position="561"/>
    </location>
</feature>
<feature type="helix" evidence="8">
    <location>
        <begin position="563"/>
        <end position="565"/>
    </location>
</feature>
<feature type="helix" evidence="8">
    <location>
        <begin position="573"/>
        <end position="590"/>
    </location>
</feature>
<feature type="turn" evidence="8">
    <location>
        <begin position="591"/>
        <end position="593"/>
    </location>
</feature>
<feature type="strand" evidence="8">
    <location>
        <begin position="607"/>
        <end position="609"/>
    </location>
</feature>
<feature type="strand" evidence="8">
    <location>
        <begin position="611"/>
        <end position="616"/>
    </location>
</feature>
<feature type="helix" evidence="8">
    <location>
        <begin position="621"/>
        <end position="623"/>
    </location>
</feature>
<feature type="strand" evidence="8">
    <location>
        <begin position="625"/>
        <end position="628"/>
    </location>
</feature>
<feature type="helix" evidence="8">
    <location>
        <begin position="631"/>
        <end position="634"/>
    </location>
</feature>
<feature type="turn" evidence="8">
    <location>
        <begin position="635"/>
        <end position="639"/>
    </location>
</feature>
<feature type="helix" evidence="8">
    <location>
        <begin position="641"/>
        <end position="653"/>
    </location>
</feature>
<feature type="helix" evidence="8">
    <location>
        <begin position="656"/>
        <end position="659"/>
    </location>
</feature>
<feature type="turn" evidence="8">
    <location>
        <begin position="671"/>
        <end position="674"/>
    </location>
</feature>
<feature type="helix" evidence="8">
    <location>
        <begin position="682"/>
        <end position="697"/>
    </location>
</feature>
<feature type="helix" evidence="8">
    <location>
        <begin position="699"/>
        <end position="705"/>
    </location>
</feature>
<feature type="helix" evidence="8">
    <location>
        <begin position="708"/>
        <end position="719"/>
    </location>
</feature>
<protein>
    <recommendedName>
        <fullName evidence="4">Exo beta-1,2-glucooligosaccharide sophorohydrolase (non-reducing end)</fullName>
        <ecNumber evidence="2">3.2.1.214</ecNumber>
    </recommendedName>
    <alternativeName>
        <fullName evidence="3">2-beta-D-glucooligosaccharide sophorohydrolase (non-reducing end)</fullName>
    </alternativeName>
    <alternativeName>
        <fullName evidence="3">Beta-1,2-glucanase</fullName>
    </alternativeName>
</protein>
<accession>A6LGF6</accession>
<organism>
    <name type="scientific">Parabacteroides distasonis (strain ATCC 8503 / DSM 20701 / CIP 104284 / JCM 5825 / NCTC 11152)</name>
    <dbReference type="NCBI Taxonomy" id="435591"/>
    <lineage>
        <taxon>Bacteria</taxon>
        <taxon>Pseudomonadati</taxon>
        <taxon>Bacteroidota</taxon>
        <taxon>Bacteroidia</taxon>
        <taxon>Bacteroidales</taxon>
        <taxon>Tannerellaceae</taxon>
        <taxon>Parabacteroides</taxon>
    </lineage>
</organism>
<dbReference type="EC" id="3.2.1.214" evidence="2"/>
<dbReference type="EMBL" id="CP000140">
    <property type="protein sequence ID" value="ABR44770.1"/>
    <property type="molecule type" value="Genomic_DNA"/>
</dbReference>
<dbReference type="RefSeq" id="WP_011967128.1">
    <property type="nucleotide sequence ID" value="NC_009615.1"/>
</dbReference>
<dbReference type="PDB" id="5Z06">
    <property type="method" value="X-ray"/>
    <property type="resolution" value="2.10 A"/>
    <property type="chains" value="A/B=19-721"/>
</dbReference>
<dbReference type="PDBsum" id="5Z06"/>
<dbReference type="SMR" id="A6LGF6"/>
<dbReference type="STRING" id="435591.BDI_3064"/>
<dbReference type="PaxDb" id="435591-BDI_3064"/>
<dbReference type="KEGG" id="pdi:BDI_3064"/>
<dbReference type="PATRIC" id="fig|435591.13.peg.3022"/>
<dbReference type="eggNOG" id="COG5368">
    <property type="taxonomic scope" value="Bacteria"/>
</dbReference>
<dbReference type="HOGENOM" id="CLU_023287_1_0_10"/>
<dbReference type="BioCyc" id="MetaCyc:MONOMER-21028"/>
<dbReference type="BioCyc" id="PDIS435591:G1G5A-3141-MONOMER"/>
<dbReference type="BRENDA" id="3.2.1.214">
    <property type="organism ID" value="754"/>
</dbReference>
<dbReference type="Proteomes" id="UP000000566">
    <property type="component" value="Chromosome"/>
</dbReference>
<dbReference type="GO" id="GO:0042597">
    <property type="term" value="C:periplasmic space"/>
    <property type="evidence" value="ECO:0007669"/>
    <property type="project" value="UniProtKB-SubCell"/>
</dbReference>
<dbReference type="GO" id="GO:0016798">
    <property type="term" value="F:hydrolase activity, acting on glycosyl bonds"/>
    <property type="evidence" value="ECO:0007669"/>
    <property type="project" value="UniProtKB-KW"/>
</dbReference>
<dbReference type="Gene3D" id="1.50.10.140">
    <property type="match status" value="1"/>
</dbReference>
<dbReference type="Gene3D" id="2.60.120.430">
    <property type="entry name" value="Galactose-binding lectin"/>
    <property type="match status" value="1"/>
</dbReference>
<dbReference type="Gene3D" id="2.60.40.10">
    <property type="entry name" value="Immunoglobulins"/>
    <property type="match status" value="1"/>
</dbReference>
<dbReference type="InterPro" id="IPR019282">
    <property type="entry name" value="Glycoamylase-like_cons_dom"/>
</dbReference>
<dbReference type="InterPro" id="IPR013783">
    <property type="entry name" value="Ig-like_fold"/>
</dbReference>
<dbReference type="Pfam" id="PF10091">
    <property type="entry name" value="Glycoamylase"/>
    <property type="match status" value="1"/>
</dbReference>
<sequence length="721" mass="82568">MKHIALLTTLLLSASLQAVEKPYDYVFFENSLMKGDYFYSQAKYTSPSWIKNARHHLPVAGSVAFTPGNSLELTYVSAPGGDWYSEIQYCPVRGNDFFREPSTLSMQVRLRESMNAAALPNIAIRYADSTYTQYLNLRNYLKDTRPGVWHPVSIPLEDFGLNAVNDTNIKKLAAVALRPGTADGNEYTIYLDDIELLPASLPSVSALNAPVLQEAKAYERHIDIKWIPQSKEDIKYYRIYRSFDGITYQPVAVRRPWMNRYTDFLGEVGKKAYYKVTAVDYALNESNDSQTVSATTYPMTDEQLLDMVQEANFRYYWEGAEPNSGLARENIPGRNDMIATGASGFGIMAIVAGIERGFITREEGVQRFLKITSFLEKADKFHGAVSHFIDGTTGKTVAFFGPKDNGGDLVETSFLFQGLLTARQYFNQENDKEKQIRKSIDNLWKNVEWSWYKQFKDSPYLYWHWSPDQAWVINHKLIGWNETMITYMLAIMGPKYGISPEMYYSGWASQEEYAQEYRADWGRVEDGKMYTNGNTYYGENLKVGVSNGGPLFFIHYSYLGLDPHKFTDKYTNYFENNQKMAKINQRYCIENQGGYVGYGEDCWGLTASDFAWNYQAQEPMPHRDNGTMAPTGALASFPYTPDASMKALRNYYRNHGSFLWGEYGFRDAFNLTVNWVSPLFMGLNQAPVTVMIENYRTNLLWNLFMSHPDVQKGIQKIQSIK</sequence>
<reference key="1">
    <citation type="journal article" date="2007" name="PLoS Biol.">
        <title>Evolution of symbiotic bacteria in the distal human intestine.</title>
        <authorList>
            <person name="Xu J."/>
            <person name="Mahowald M.A."/>
            <person name="Ley R.E."/>
            <person name="Lozupone C.A."/>
            <person name="Hamady M."/>
            <person name="Martens E.C."/>
            <person name="Henrissat B."/>
            <person name="Coutinho P.M."/>
            <person name="Minx P."/>
            <person name="Latreille P."/>
            <person name="Cordum H."/>
            <person name="Van Brunt A."/>
            <person name="Kim K."/>
            <person name="Fulton R.S."/>
            <person name="Fulton L.A."/>
            <person name="Clifton S.W."/>
            <person name="Wilson R.K."/>
            <person name="Knight R.D."/>
            <person name="Gordon J.I."/>
        </authorList>
    </citation>
    <scope>NUCLEOTIDE SEQUENCE [LARGE SCALE GENOMIC DNA]</scope>
    <source>
        <strain>ATCC 8503 / DSM 20701 / CIP 104284 / JCM 5825 / NCTC 11152</strain>
    </source>
</reference>
<reference evidence="7" key="2">
    <citation type="journal article" date="2018" name="Biochemistry">
        <title>Characterization and structural analysis of a novel exo-type enzyme acting on beta-1,2-glucooligosaccharides from Parabacteroides distasonis.</title>
        <authorList>
            <person name="Shimizu H."/>
            <person name="Nakajima M."/>
            <person name="Miyanaga A."/>
            <person name="Takahashi Y."/>
            <person name="Tanaka N."/>
            <person name="Kobayashi K."/>
            <person name="Sugimoto N."/>
            <person name="Nakai H."/>
            <person name="Taguchi H."/>
        </authorList>
    </citation>
    <scope>X-RAY CRYSTALLOGRAPHY (2.10 ANGSTROMS) OF 19-721</scope>
    <scope>FUNCTION</scope>
    <scope>CATALYTIC ACTIVITY</scope>
    <scope>BIOPHYSICOCHEMICAL PROPERTIES</scope>
    <scope>SUBUNIT</scope>
    <scope>SUBCELLULAR LOCATION</scope>
    <source>
        <strain>ATCC 8503 / DSM 20701 / CIP 104284 / JCM 5825 / NCTC 11152</strain>
    </source>
</reference>
<name>SOPH_PARD8</name>